<keyword id="KW-1185">Reference proteome</keyword>
<protein>
    <recommendedName>
        <fullName>Uncharacterized protein YFL041W-A</fullName>
    </recommendedName>
</protein>
<organism>
    <name type="scientific">Saccharomyces cerevisiae (strain ATCC 204508 / S288c)</name>
    <name type="common">Baker's yeast</name>
    <dbReference type="NCBI Taxonomy" id="559292"/>
    <lineage>
        <taxon>Eukaryota</taxon>
        <taxon>Fungi</taxon>
        <taxon>Dikarya</taxon>
        <taxon>Ascomycota</taxon>
        <taxon>Saccharomycotina</taxon>
        <taxon>Saccharomycetes</taxon>
        <taxon>Saccharomycetales</taxon>
        <taxon>Saccharomycetaceae</taxon>
        <taxon>Saccharomyces</taxon>
    </lineage>
</organism>
<reference key="1">
    <citation type="journal article" date="1995" name="Nat. Genet.">
        <title>Analysis of the nucleotide sequence of chromosome VI from Saccharomyces cerevisiae.</title>
        <authorList>
            <person name="Murakami Y."/>
            <person name="Naitou M."/>
            <person name="Hagiwara H."/>
            <person name="Shibata T."/>
            <person name="Ozawa M."/>
            <person name="Sasanuma S."/>
            <person name="Sasanuma M."/>
            <person name="Tsuchiya Y."/>
            <person name="Soeda E."/>
            <person name="Yokoyama K."/>
            <person name="Yamazaki M."/>
            <person name="Tashiro H."/>
            <person name="Eki T."/>
        </authorList>
    </citation>
    <scope>NUCLEOTIDE SEQUENCE [LARGE SCALE GENOMIC DNA]</scope>
    <source>
        <strain>ATCC 204508 / S288c</strain>
    </source>
</reference>
<reference key="2">
    <citation type="journal article" date="2014" name="G3 (Bethesda)">
        <title>The reference genome sequence of Saccharomyces cerevisiae: Then and now.</title>
        <authorList>
            <person name="Engel S.R."/>
            <person name="Dietrich F.S."/>
            <person name="Fisk D.G."/>
            <person name="Binkley G."/>
            <person name="Balakrishnan R."/>
            <person name="Costanzo M.C."/>
            <person name="Dwight S.S."/>
            <person name="Hitz B.C."/>
            <person name="Karra K."/>
            <person name="Nash R.S."/>
            <person name="Weng S."/>
            <person name="Wong E.D."/>
            <person name="Lloyd P."/>
            <person name="Skrzypek M.S."/>
            <person name="Miyasato S.R."/>
            <person name="Simison M."/>
            <person name="Cherry J.M."/>
        </authorList>
    </citation>
    <scope>GENOME REANNOTATION</scope>
    <source>
        <strain>ATCC 204508 / S288c</strain>
    </source>
</reference>
<reference key="3">
    <citation type="journal article" date="2003" name="Genome Res.">
        <title>Systematic discovery of new genes in the Saccharomyces cerevisiae genome.</title>
        <authorList>
            <person name="Kessler M.M."/>
            <person name="Zeng Q."/>
            <person name="Hogan S."/>
            <person name="Cook R."/>
            <person name="Morales A.J."/>
            <person name="Cottarel G."/>
        </authorList>
    </citation>
    <scope>GENOME REANNOTATION</scope>
</reference>
<dbReference type="EMBL" id="D50617">
    <property type="status" value="NOT_ANNOTATED_CDS"/>
    <property type="molecule type" value="Genomic_DNA"/>
</dbReference>
<dbReference type="EMBL" id="BK006940">
    <property type="protein sequence ID" value="DAA12398.1"/>
    <property type="molecule type" value="Genomic_DNA"/>
</dbReference>
<dbReference type="RefSeq" id="NP_878071.1">
    <property type="nucleotide sequence ID" value="NM_001184549.1"/>
</dbReference>
<dbReference type="BioGRID" id="36947">
    <property type="interactions" value="18"/>
</dbReference>
<dbReference type="FunCoup" id="Q3E817">
    <property type="interactions" value="6"/>
</dbReference>
<dbReference type="PaxDb" id="4932-YFL041W-A"/>
<dbReference type="EnsemblFungi" id="YFL041W-A_mRNA">
    <property type="protein sequence ID" value="YFL041W-A"/>
    <property type="gene ID" value="YFL041W-A"/>
</dbReference>
<dbReference type="GeneID" id="1466401"/>
<dbReference type="KEGG" id="sce:YFL041W-A"/>
<dbReference type="AGR" id="SGD:S000028547"/>
<dbReference type="SGD" id="S000028547">
    <property type="gene designation" value="YFL041W-A"/>
</dbReference>
<dbReference type="VEuPathDB" id="FungiDB:YFL041W-A"/>
<dbReference type="HOGENOM" id="CLU_2924482_0_0_1"/>
<dbReference type="InParanoid" id="Q3E817"/>
<dbReference type="OrthoDB" id="10272432at2759"/>
<dbReference type="BioCyc" id="YEAST:G3O-30519-MONOMER"/>
<dbReference type="BioGRID-ORCS" id="1466401">
    <property type="hits" value="1 hit in 10 CRISPR screens"/>
</dbReference>
<dbReference type="PRO" id="PR:Q3E817"/>
<dbReference type="Proteomes" id="UP000002311">
    <property type="component" value="Chromosome VI"/>
</dbReference>
<dbReference type="RNAct" id="Q3E817">
    <property type="molecule type" value="protein"/>
</dbReference>
<proteinExistence type="predicted"/>
<gene>
    <name type="ordered locus">YFL041W-A</name>
</gene>
<sequence length="63" mass="7583">MKMWGPSQRDSFREITYKVKFKYDDGDYSLAIDLMSRDCINVYELITDRLLVDFLSKKLLKLR</sequence>
<feature type="chain" id="PRO_0000245373" description="Uncharacterized protein YFL041W-A">
    <location>
        <begin position="1"/>
        <end position="63"/>
    </location>
</feature>
<name>YF041_YEAST</name>
<accession>Q3E817</accession>
<accession>D6VTI8</accession>